<comment type="function">
    <text evidence="4">Has transcriptional repression activity. Acts as a corepressor of ESR1; the function seems to involve CTBP1 and histone deacetylases.</text>
</comment>
<comment type="subunit">
    <text evidence="3 4">Interacts with ESR1 and NRIP1 (PubMed:17085477). Interacts (via PXDLS motif) with CTBP1 (PubMed:16393996, PubMed:17085477).</text>
</comment>
<comment type="interaction">
    <interactant intactId="EBI-2813661">
        <id>Q8N895</id>
    </interactant>
    <interactant intactId="EBI-640741">
        <id>P01023</id>
        <label>A2M</label>
    </interactant>
    <organismsDiffer>false</organismsDiffer>
    <experiments>3</experiments>
</comment>
<comment type="interaction">
    <interactant intactId="EBI-2813661">
        <id>Q8N895</id>
    </interactant>
    <interactant intactId="EBI-357530">
        <id>Q9ULX6</id>
        <label>AKAP8L</label>
    </interactant>
    <organismsDiffer>false</organismsDiffer>
    <experiments>3</experiments>
</comment>
<comment type="interaction">
    <interactant intactId="EBI-2813661">
        <id>Q8N895</id>
    </interactant>
    <interactant intactId="EBI-21535880">
        <id>Q92870-2</id>
        <label>APBB2</label>
    </interactant>
    <organismsDiffer>false</organismsDiffer>
    <experiments>3</experiments>
</comment>
<comment type="interaction">
    <interactant intactId="EBI-2813661">
        <id>Q8N895</id>
    </interactant>
    <interactant intactId="EBI-77613">
        <id>P05067</id>
        <label>APP</label>
    </interactant>
    <organismsDiffer>false</organismsDiffer>
    <experiments>3</experiments>
</comment>
<comment type="interaction">
    <interactant intactId="EBI-2813661">
        <id>Q8N895</id>
    </interactant>
    <interactant intactId="EBI-930964">
        <id>P54253</id>
        <label>ATXN1</label>
    </interactant>
    <organismsDiffer>false</organismsDiffer>
    <experiments>6</experiments>
</comment>
<comment type="interaction">
    <interactant intactId="EBI-2813661">
        <id>Q8N895</id>
    </interactant>
    <interactant intactId="EBI-946046">
        <id>P54252</id>
        <label>ATXN3</label>
    </interactant>
    <organismsDiffer>false</organismsDiffer>
    <experiments>3</experiments>
</comment>
<comment type="interaction">
    <interactant intactId="EBI-2813661">
        <id>Q8N895</id>
    </interactant>
    <interactant intactId="EBI-3866279">
        <id>Q9BWT7</id>
        <label>CARD10</label>
    </interactant>
    <organismsDiffer>false</organismsDiffer>
    <experiments>3</experiments>
</comment>
<comment type="interaction">
    <interactant intactId="EBI-2813661">
        <id>Q8N895</id>
    </interactant>
    <interactant intactId="EBI-739624">
        <id>Q8NHQ1</id>
        <label>CEP70</label>
    </interactant>
    <organismsDiffer>false</organismsDiffer>
    <experiments>8</experiments>
</comment>
<comment type="interaction">
    <interactant intactId="EBI-2813661">
        <id>Q8N895</id>
    </interactant>
    <interactant intactId="EBI-908846">
        <id>Q13363</id>
        <label>CTBP1</label>
    </interactant>
    <organismsDiffer>false</organismsDiffer>
    <experiments>5</experiments>
</comment>
<comment type="interaction">
    <interactant intactId="EBI-2813661">
        <id>Q8N895</id>
    </interactant>
    <interactant intactId="EBI-10976677">
        <id>G5E9A7</id>
        <label>DMWD</label>
    </interactant>
    <organismsDiffer>false</organismsDiffer>
    <experiments>3</experiments>
</comment>
<comment type="interaction">
    <interactant intactId="EBI-2813661">
        <id>Q8N895</id>
    </interactant>
    <interactant intactId="EBI-10968534">
        <id>P50570-2</id>
        <label>DNM2</label>
    </interactant>
    <organismsDiffer>false</organismsDiffer>
    <experiments>3</experiments>
</comment>
<comment type="interaction">
    <interactant intactId="EBI-2813661">
        <id>Q8N895</id>
    </interactant>
    <interactant intactId="EBI-78473">
        <id>P03372</id>
        <label>ESR1</label>
    </interactant>
    <organismsDiffer>false</organismsDiffer>
    <experiments>6</experiments>
</comment>
<comment type="interaction">
    <interactant intactId="EBI-2813661">
        <id>Q8N895</id>
    </interactant>
    <interactant intactId="EBI-1955541">
        <id>Q53GS7</id>
        <label>GLE1</label>
    </interactant>
    <organismsDiffer>false</organismsDiffer>
    <experiments>3</experiments>
</comment>
<comment type="interaction">
    <interactant intactId="EBI-2813661">
        <id>Q8N895</id>
    </interactant>
    <interactant intactId="EBI-747754">
        <id>P28799</id>
        <label>GRN</label>
    </interactant>
    <organismsDiffer>false</organismsDiffer>
    <experiments>3</experiments>
</comment>
<comment type="interaction">
    <interactant intactId="EBI-2813661">
        <id>Q8N895</id>
    </interactant>
    <interactant intactId="EBI-25860013">
        <id>P28799-2</id>
        <label>GRN</label>
    </interactant>
    <organismsDiffer>false</organismsDiffer>
    <experiments>3</experiments>
</comment>
<comment type="interaction">
    <interactant intactId="EBI-2813661">
        <id>Q8N895</id>
    </interactant>
    <interactant intactId="EBI-466029">
        <id>P42858</id>
        <label>HTT</label>
    </interactant>
    <organismsDiffer>false</organismsDiffer>
    <experiments>15</experiments>
</comment>
<comment type="interaction">
    <interactant intactId="EBI-2813661">
        <id>Q8N895</id>
    </interactant>
    <interactant intactId="EBI-10975473">
        <id>O60333-2</id>
        <label>KIF1B</label>
    </interactant>
    <organismsDiffer>false</organismsDiffer>
    <experiments>3</experiments>
</comment>
<comment type="interaction">
    <interactant intactId="EBI-2813661">
        <id>Q8N895</id>
    </interactant>
    <interactant intactId="EBI-746484">
        <id>P48552</id>
        <label>NRIP1</label>
    </interactant>
    <organismsDiffer>false</organismsDiffer>
    <experiments>2</experiments>
</comment>
<comment type="interaction">
    <interactant intactId="EBI-2813661">
        <id>Q8N895</id>
    </interactant>
    <interactant intactId="EBI-988601">
        <id>O43933</id>
        <label>PEX1</label>
    </interactant>
    <organismsDiffer>false</organismsDiffer>
    <experiments>3</experiments>
</comment>
<comment type="interaction">
    <interactant intactId="EBI-2813661">
        <id>Q8N895</id>
    </interactant>
    <interactant intactId="EBI-2846068">
        <id>Q9BXM7</id>
        <label>PINK1</label>
    </interactant>
    <organismsDiffer>false</organismsDiffer>
    <experiments>3</experiments>
</comment>
<comment type="interaction">
    <interactant intactId="EBI-2813661">
        <id>Q8N895</id>
    </interactant>
    <interactant intactId="EBI-749195">
        <id>P60891</id>
        <label>PRPS1</label>
    </interactant>
    <organismsDiffer>false</organismsDiffer>
    <experiments>3</experiments>
</comment>
<comment type="interaction">
    <interactant intactId="EBI-2813661">
        <id>Q8N895</id>
    </interactant>
    <interactant intactId="EBI-2010251">
        <id>P49810</id>
        <label>PSEN2</label>
    </interactant>
    <organismsDiffer>false</organismsDiffer>
    <experiments>3</experiments>
</comment>
<comment type="interaction">
    <interactant intactId="EBI-2813661">
        <id>Q8N895</id>
    </interactant>
    <interactant intactId="EBI-348380">
        <id>P25788</id>
        <label>PSMA3</label>
    </interactant>
    <organismsDiffer>false</organismsDiffer>
    <experiments>5</experiments>
</comment>
<comment type="interaction">
    <interactant intactId="EBI-2813661">
        <id>Q8N895</id>
    </interactant>
    <interactant intactId="EBI-396669">
        <id>Q9Y3C5</id>
        <label>RNF11</label>
    </interactant>
    <organismsDiffer>false</organismsDiffer>
    <experiments>3</experiments>
</comment>
<comment type="interaction">
    <interactant intactId="EBI-2813661">
        <id>Q8N895</id>
    </interactant>
    <interactant intactId="EBI-985879">
        <id>P37840</id>
        <label>SNCA</label>
    </interactant>
    <organismsDiffer>false</organismsDiffer>
    <experiments>3</experiments>
</comment>
<comment type="interaction">
    <interactant intactId="EBI-2813661">
        <id>Q8N895</id>
    </interactant>
    <interactant intactId="EBI-5235340">
        <id>Q7Z699</id>
        <label>SPRED1</label>
    </interactant>
    <organismsDiffer>false</organismsDiffer>
    <experiments>3</experiments>
</comment>
<comment type="interaction">
    <interactant intactId="EBI-2813661">
        <id>Q8N895</id>
    </interactant>
    <interactant intactId="EBI-372899">
        <id>Q13148</id>
        <label>TARDBP</label>
    </interactant>
    <organismsDiffer>false</organismsDiffer>
    <experiments>4</experiments>
</comment>
<comment type="interaction">
    <interactant intactId="EBI-2813661">
        <id>Q8N895</id>
    </interactant>
    <interactant intactId="EBI-12806590">
        <id>Q86WV8</id>
        <label>TSC1</label>
    </interactant>
    <organismsDiffer>false</organismsDiffer>
    <experiments>3</experiments>
</comment>
<comment type="interaction">
    <interactant intactId="EBI-2813661">
        <id>Q8N895</id>
    </interactant>
    <interactant intactId="EBI-720609">
        <id>O76024</id>
        <label>WFS1</label>
    </interactant>
    <organismsDiffer>false</organismsDiffer>
    <experiments>3</experiments>
</comment>
<comment type="subcellular location">
    <subcellularLocation>
        <location evidence="3 4">Nucleus</location>
    </subcellularLocation>
</comment>
<comment type="tissue specificity">
    <text evidence="3">Expressed in immature and mature dendritic cells (DCs). Not detected in other blood cell types.</text>
</comment>
<evidence type="ECO:0000255" key="1">
    <source>
        <dbReference type="PROSITE-ProRule" id="PRU00042"/>
    </source>
</evidence>
<evidence type="ECO:0000256" key="2">
    <source>
        <dbReference type="SAM" id="MobiDB-lite"/>
    </source>
</evidence>
<evidence type="ECO:0000269" key="3">
    <source>
    </source>
</evidence>
<evidence type="ECO:0000269" key="4">
    <source>
    </source>
</evidence>
<evidence type="ECO:0000303" key="5">
    <source>
    </source>
</evidence>
<evidence type="ECO:0000303" key="6">
    <source>
    </source>
</evidence>
<feature type="chain" id="PRO_0000047548" description="Zinc finger protein 366">
    <location>
        <begin position="1"/>
        <end position="744"/>
    </location>
</feature>
<feature type="zinc finger region" description="C2H2-type 1" evidence="1">
    <location>
        <begin position="253"/>
        <end position="275"/>
    </location>
</feature>
<feature type="zinc finger region" description="C2H2-type 2" evidence="1">
    <location>
        <begin position="281"/>
        <end position="303"/>
    </location>
</feature>
<feature type="zinc finger region" description="C2H2-type 3" evidence="1">
    <location>
        <begin position="309"/>
        <end position="331"/>
    </location>
</feature>
<feature type="zinc finger region" description="C2H2-type 4" evidence="1">
    <location>
        <begin position="337"/>
        <end position="359"/>
    </location>
</feature>
<feature type="zinc finger region" description="C2H2-type 5" evidence="1">
    <location>
        <begin position="365"/>
        <end position="387"/>
    </location>
</feature>
<feature type="zinc finger region" description="C2H2-type 6" evidence="1">
    <location>
        <begin position="393"/>
        <end position="415"/>
    </location>
</feature>
<feature type="zinc finger region" description="C2H2-type 7" evidence="1">
    <location>
        <begin position="421"/>
        <end position="443"/>
    </location>
</feature>
<feature type="zinc finger region" description="C2H2-type 8" evidence="1">
    <location>
        <begin position="449"/>
        <end position="471"/>
    </location>
</feature>
<feature type="zinc finger region" description="C2H2-type 9" evidence="1">
    <location>
        <begin position="477"/>
        <end position="499"/>
    </location>
</feature>
<feature type="zinc finger region" description="C2H2-type 10" evidence="1">
    <location>
        <begin position="505"/>
        <end position="527"/>
    </location>
</feature>
<feature type="zinc finger region" description="C2H2-type 11" evidence="1">
    <location>
        <begin position="533"/>
        <end position="556"/>
    </location>
</feature>
<feature type="region of interest" description="Disordered" evidence="2">
    <location>
        <begin position="206"/>
        <end position="228"/>
    </location>
</feature>
<feature type="region of interest" description="Interaction with NRIP1" evidence="4">
    <location>
        <begin position="455"/>
        <end position="744"/>
    </location>
</feature>
<feature type="region of interest" description="Disordered" evidence="2">
    <location>
        <begin position="603"/>
        <end position="627"/>
    </location>
</feature>
<feature type="region of interest" description="Disordered" evidence="2">
    <location>
        <begin position="664"/>
        <end position="692"/>
    </location>
</feature>
<feature type="short sequence motif" description="PXDLS" evidence="3 4">
    <location>
        <begin position="590"/>
        <end position="594"/>
    </location>
</feature>
<feature type="compositionally biased region" description="Basic and acidic residues" evidence="2">
    <location>
        <begin position="213"/>
        <end position="228"/>
    </location>
</feature>
<feature type="sequence variant" id="VAR_033564" description="In dbSNP:rs13188519.">
    <original>A</original>
    <variation>G</variation>
    <location>
        <position position="739"/>
    </location>
</feature>
<feature type="mutagenesis site" description="Abolishes interaction with CTBP1 and in part relieves transcription repression; when associated with A-592." evidence="4">
    <original>P</original>
    <variation>A</variation>
    <location>
        <position position="590"/>
    </location>
</feature>
<feature type="mutagenesis site" description="Abolishes interaction with CTBP1 and in part relieves transcription repression; when associated with A-590." evidence="4">
    <original>D</original>
    <variation>A</variation>
    <location>
        <position position="592"/>
    </location>
</feature>
<feature type="mutagenesis site" description="Abolishes interaction with CTBP1. Abolishes interaction with CTBP1; when associated with A-648." evidence="3">
    <original>L</original>
    <variation>A</variation>
    <location>
        <position position="593"/>
    </location>
</feature>
<feature type="mutagenesis site" description="Decreases interaction with CTBP1; when associated with A-647." evidence="4">
    <original>P</original>
    <variation>A</variation>
    <location>
        <position position="645"/>
    </location>
</feature>
<feature type="mutagenesis site" description="Decreases interaction with CTBP1; when associated with A-645." evidence="4">
    <original>D</original>
    <variation>A</variation>
    <location>
        <position position="647"/>
    </location>
</feature>
<feature type="mutagenesis site" description="No effect on interaction with CTBP1. Abolishes interaction with CTBP1; when associated with A-593." evidence="3">
    <original>L</original>
    <variation>A</variation>
    <location>
        <position position="648"/>
    </location>
</feature>
<accession>Q8N895</accession>
<accession>Q5HYI9</accession>
<accession>Q7RTV4</accession>
<sequence>MQKEMKMIKDEDVHFDLAVKKTPSFPHCLQPVASRGKAPQRHPFPEALRGPFSQFRYEPPPGDLDGFPGVFEGAGSRKRKSMPTKMPYNHPAEEVTLALHSEENKNHGLPNLPLLFPQPPRPKYDSQMIDLCNVGFQFYRSLEHFGGKPVKQEPIKPSAVWPQPTPTPFLPTPYPYYPKVHPGLMFPFFVPSSSPFPFSRHTFLPKQPPEPLLPRKAEPQESEETKQKVERVDVNVQIDDSYYVDVGGSQKRWQCPTCEKSYTSKYNLVTHILGHSGIKPHACTHCGKLFKQLSHLHTHMLTHQGTRPHKCQVCHKAFTQTSHLKRHMMQHSEVKPHNCRVCGRGFAYPSELKAHEAKHASGRENICVECGLDFPTLAQLKRHLTTHRGPIQYNCSECDKTFQYPSQLQNHMMKHKDIRPYICSECGMEFVQPHHLKQHSLTHKGVKEHKCGICGREFTLLANMKRHVLIHTNIRAYQCHLCYKSFVQKQTLKAHMIVHSDVKPFKCKLCGKEFNRMHNLMGHMHLHSDSKPFKCLYCPSKFTLKGNLTRHMKVKHGVMERGLHSQGLGRGRIALAQTAGVLRSLEQEEPFDLSQKRRAKVPVFQSDGESAQGSHCHEEEEEDNCYEVEPYSPGLAPQSQQLCTPEDLSTKSEHAPEVLEEACKEEKEDASKGEWEKRSKGDLGAEGGQERDCAGRDECLSLRAFQSTRRGPSFSDYLYFKHRDESLKELLERKMEKQAVLLGI</sequence>
<gene>
    <name evidence="5" type="primary">ZNF366</name>
</gene>
<keyword id="KW-0238">DNA-binding</keyword>
<keyword id="KW-0479">Metal-binding</keyword>
<keyword id="KW-0539">Nucleus</keyword>
<keyword id="KW-1267">Proteomics identification</keyword>
<keyword id="KW-1185">Reference proteome</keyword>
<keyword id="KW-0677">Repeat</keyword>
<keyword id="KW-0678">Repressor</keyword>
<keyword id="KW-0804">Transcription</keyword>
<keyword id="KW-0805">Transcription regulation</keyword>
<keyword id="KW-0862">Zinc</keyword>
<keyword id="KW-0863">Zinc-finger</keyword>
<organism>
    <name type="scientific">Homo sapiens</name>
    <name type="common">Human</name>
    <dbReference type="NCBI Taxonomy" id="9606"/>
    <lineage>
        <taxon>Eukaryota</taxon>
        <taxon>Metazoa</taxon>
        <taxon>Chordata</taxon>
        <taxon>Craniata</taxon>
        <taxon>Vertebrata</taxon>
        <taxon>Euteleostomi</taxon>
        <taxon>Mammalia</taxon>
        <taxon>Eutheria</taxon>
        <taxon>Euarchontoglires</taxon>
        <taxon>Primates</taxon>
        <taxon>Haplorrhini</taxon>
        <taxon>Catarrhini</taxon>
        <taxon>Hominidae</taxon>
        <taxon>Homo</taxon>
    </lineage>
</organism>
<dbReference type="EMBL" id="AK097115">
    <property type="protein sequence ID" value="BAC04954.1"/>
    <property type="molecule type" value="mRNA"/>
</dbReference>
<dbReference type="EMBL" id="BX647592">
    <property type="protein sequence ID" value="CAI46096.1"/>
    <property type="molecule type" value="mRNA"/>
</dbReference>
<dbReference type="EMBL" id="CH471084">
    <property type="protein sequence ID" value="EAW95707.1"/>
    <property type="molecule type" value="Genomic_DNA"/>
</dbReference>
<dbReference type="EMBL" id="BC121053">
    <property type="protein sequence ID" value="AAI21054.1"/>
    <property type="molecule type" value="mRNA"/>
</dbReference>
<dbReference type="EMBL" id="BK000210">
    <property type="protein sequence ID" value="DAA00066.1"/>
    <property type="molecule type" value="mRNA"/>
</dbReference>
<dbReference type="CCDS" id="CCDS4015.1"/>
<dbReference type="RefSeq" id="NP_689838.1">
    <property type="nucleotide sequence ID" value="NM_152625.3"/>
</dbReference>
<dbReference type="SMR" id="Q8N895"/>
<dbReference type="BioGRID" id="127947">
    <property type="interactions" value="9"/>
</dbReference>
<dbReference type="FunCoup" id="Q8N895">
    <property type="interactions" value="391"/>
</dbReference>
<dbReference type="IntAct" id="Q8N895">
    <property type="interactions" value="34"/>
</dbReference>
<dbReference type="STRING" id="9606.ENSP00000313158"/>
<dbReference type="GlyGen" id="Q8N895">
    <property type="glycosylation" value="2 sites"/>
</dbReference>
<dbReference type="iPTMnet" id="Q8N895"/>
<dbReference type="PhosphoSitePlus" id="Q8N895"/>
<dbReference type="BioMuta" id="ZNF366"/>
<dbReference type="DMDM" id="28380235"/>
<dbReference type="jPOST" id="Q8N895"/>
<dbReference type="MassIVE" id="Q8N895"/>
<dbReference type="PaxDb" id="9606-ENSP00000313158"/>
<dbReference type="PeptideAtlas" id="Q8N895"/>
<dbReference type="ProteomicsDB" id="72385"/>
<dbReference type="Antibodypedia" id="12194">
    <property type="antibodies" value="136 antibodies from 27 providers"/>
</dbReference>
<dbReference type="DNASU" id="167465"/>
<dbReference type="Ensembl" id="ENST00000318442.6">
    <property type="protein sequence ID" value="ENSP00000313158.5"/>
    <property type="gene ID" value="ENSG00000178175.12"/>
</dbReference>
<dbReference type="GeneID" id="167465"/>
<dbReference type="KEGG" id="hsa:167465"/>
<dbReference type="MANE-Select" id="ENST00000318442.6">
    <property type="protein sequence ID" value="ENSP00000313158.5"/>
    <property type="RefSeq nucleotide sequence ID" value="NM_152625.3"/>
    <property type="RefSeq protein sequence ID" value="NP_689838.1"/>
</dbReference>
<dbReference type="UCSC" id="uc003kce.2">
    <property type="organism name" value="human"/>
</dbReference>
<dbReference type="AGR" id="HGNC:18316"/>
<dbReference type="CTD" id="167465"/>
<dbReference type="DisGeNET" id="167465"/>
<dbReference type="GeneCards" id="ZNF366"/>
<dbReference type="HGNC" id="HGNC:18316">
    <property type="gene designation" value="ZNF366"/>
</dbReference>
<dbReference type="HPA" id="ENSG00000178175">
    <property type="expression patterns" value="Low tissue specificity"/>
</dbReference>
<dbReference type="MIM" id="610159">
    <property type="type" value="gene"/>
</dbReference>
<dbReference type="neXtProt" id="NX_Q8N895"/>
<dbReference type="OpenTargets" id="ENSG00000178175"/>
<dbReference type="PharmGKB" id="PA38314"/>
<dbReference type="VEuPathDB" id="HostDB:ENSG00000178175"/>
<dbReference type="eggNOG" id="KOG1721">
    <property type="taxonomic scope" value="Eukaryota"/>
</dbReference>
<dbReference type="GeneTree" id="ENSGT00940000155498"/>
<dbReference type="HOGENOM" id="CLU_019459_2_1_1"/>
<dbReference type="InParanoid" id="Q8N895"/>
<dbReference type="OMA" id="FKHRNKS"/>
<dbReference type="OrthoDB" id="7295497at2759"/>
<dbReference type="PAN-GO" id="Q8N895">
    <property type="GO annotations" value="7 GO annotations based on evolutionary models"/>
</dbReference>
<dbReference type="PhylomeDB" id="Q8N895"/>
<dbReference type="TreeFam" id="TF331510"/>
<dbReference type="PathwayCommons" id="Q8N895"/>
<dbReference type="SignaLink" id="Q8N895"/>
<dbReference type="BioGRID-ORCS" id="167465">
    <property type="hits" value="9 hits in 1167 CRISPR screens"/>
</dbReference>
<dbReference type="ChiTaRS" id="ZNF366">
    <property type="organism name" value="human"/>
</dbReference>
<dbReference type="GeneWiki" id="ZNF366"/>
<dbReference type="GenomeRNAi" id="167465"/>
<dbReference type="Pharos" id="Q8N895">
    <property type="development level" value="Tbio"/>
</dbReference>
<dbReference type="PRO" id="PR:Q8N895"/>
<dbReference type="Proteomes" id="UP000005640">
    <property type="component" value="Chromosome 5"/>
</dbReference>
<dbReference type="RNAct" id="Q8N895">
    <property type="molecule type" value="protein"/>
</dbReference>
<dbReference type="Bgee" id="ENSG00000178175">
    <property type="expression patterns" value="Expressed in sural nerve and 99 other cell types or tissues"/>
</dbReference>
<dbReference type="ExpressionAtlas" id="Q8N895">
    <property type="expression patterns" value="baseline and differential"/>
</dbReference>
<dbReference type="GO" id="GO:0005654">
    <property type="term" value="C:nucleoplasm"/>
    <property type="evidence" value="ECO:0000314"/>
    <property type="project" value="HPA"/>
</dbReference>
<dbReference type="GO" id="GO:0005634">
    <property type="term" value="C:nucleus"/>
    <property type="evidence" value="ECO:0000314"/>
    <property type="project" value="UniProtKB"/>
</dbReference>
<dbReference type="GO" id="GO:0003700">
    <property type="term" value="F:DNA-binding transcription factor activity"/>
    <property type="evidence" value="ECO:0000318"/>
    <property type="project" value="GO_Central"/>
</dbReference>
<dbReference type="GO" id="GO:0030331">
    <property type="term" value="F:nuclear estrogen receptor binding"/>
    <property type="evidence" value="ECO:0000314"/>
    <property type="project" value="UniProtKB"/>
</dbReference>
<dbReference type="GO" id="GO:0000978">
    <property type="term" value="F:RNA polymerase II cis-regulatory region sequence-specific DNA binding"/>
    <property type="evidence" value="ECO:0000318"/>
    <property type="project" value="GO_Central"/>
</dbReference>
<dbReference type="GO" id="GO:0003714">
    <property type="term" value="F:transcription corepressor activity"/>
    <property type="evidence" value="ECO:0000314"/>
    <property type="project" value="UniProtKB"/>
</dbReference>
<dbReference type="GO" id="GO:0008270">
    <property type="term" value="F:zinc ion binding"/>
    <property type="evidence" value="ECO:0007669"/>
    <property type="project" value="UniProtKB-KW"/>
</dbReference>
<dbReference type="GO" id="GO:0033147">
    <property type="term" value="P:negative regulation of intracellular estrogen receptor signaling pathway"/>
    <property type="evidence" value="ECO:0000314"/>
    <property type="project" value="UniProtKB"/>
</dbReference>
<dbReference type="GO" id="GO:0000122">
    <property type="term" value="P:negative regulation of transcription by RNA polymerase II"/>
    <property type="evidence" value="ECO:0000314"/>
    <property type="project" value="UniProtKB"/>
</dbReference>
<dbReference type="GO" id="GO:0043627">
    <property type="term" value="P:response to estrogen"/>
    <property type="evidence" value="ECO:0000314"/>
    <property type="project" value="UniProtKB"/>
</dbReference>
<dbReference type="FunFam" id="3.30.160.60:FF:000161">
    <property type="entry name" value="Zinc finger protein 366"/>
    <property type="match status" value="1"/>
</dbReference>
<dbReference type="FunFam" id="3.30.160.60:FF:000186">
    <property type="entry name" value="Zinc finger protein 366"/>
    <property type="match status" value="1"/>
</dbReference>
<dbReference type="FunFam" id="3.30.160.60:FF:000203">
    <property type="entry name" value="Zinc finger protein 366"/>
    <property type="match status" value="1"/>
</dbReference>
<dbReference type="FunFam" id="3.30.160.60:FF:001180">
    <property type="entry name" value="Zinc finger protein 366"/>
    <property type="match status" value="1"/>
</dbReference>
<dbReference type="FunFam" id="3.30.160.60:FF:001304">
    <property type="entry name" value="Zinc finger protein 366"/>
    <property type="match status" value="1"/>
</dbReference>
<dbReference type="FunFam" id="3.30.160.60:FF:001574">
    <property type="entry name" value="Zinc finger protein 366"/>
    <property type="match status" value="1"/>
</dbReference>
<dbReference type="FunFam" id="3.30.160.60:FF:001721">
    <property type="entry name" value="Zinc finger protein 366"/>
    <property type="match status" value="1"/>
</dbReference>
<dbReference type="FunFam" id="3.30.160.60:FF:000182">
    <property type="entry name" value="zinc finger protein 366"/>
    <property type="match status" value="1"/>
</dbReference>
<dbReference type="FunFam" id="3.30.160.60:FF:000191">
    <property type="entry name" value="zinc finger protein 366"/>
    <property type="match status" value="1"/>
</dbReference>
<dbReference type="FunFam" id="3.30.160.60:FF:000502">
    <property type="entry name" value="Zinc finger protein 710"/>
    <property type="match status" value="1"/>
</dbReference>
<dbReference type="Gene3D" id="3.30.160.60">
    <property type="entry name" value="Classic Zinc Finger"/>
    <property type="match status" value="10"/>
</dbReference>
<dbReference type="InterPro" id="IPR050636">
    <property type="entry name" value="C2H2-ZF_domain-containing"/>
</dbReference>
<dbReference type="InterPro" id="IPR036236">
    <property type="entry name" value="Znf_C2H2_sf"/>
</dbReference>
<dbReference type="InterPro" id="IPR013087">
    <property type="entry name" value="Znf_C2H2_type"/>
</dbReference>
<dbReference type="PANTHER" id="PTHR47772:SF13">
    <property type="entry name" value="GASTRULA ZINC FINGER PROTEIN XLCGF49.1-LIKE-RELATED"/>
    <property type="match status" value="1"/>
</dbReference>
<dbReference type="PANTHER" id="PTHR47772">
    <property type="entry name" value="ZINC FINGER PROTEIN 200"/>
    <property type="match status" value="1"/>
</dbReference>
<dbReference type="Pfam" id="PF00096">
    <property type="entry name" value="zf-C2H2"/>
    <property type="match status" value="10"/>
</dbReference>
<dbReference type="Pfam" id="PF13912">
    <property type="entry name" value="zf-C2H2_6"/>
    <property type="match status" value="1"/>
</dbReference>
<dbReference type="SMART" id="SM00355">
    <property type="entry name" value="ZnF_C2H2"/>
    <property type="match status" value="11"/>
</dbReference>
<dbReference type="SUPFAM" id="SSF57667">
    <property type="entry name" value="beta-beta-alpha zinc fingers"/>
    <property type="match status" value="6"/>
</dbReference>
<dbReference type="PROSITE" id="PS00028">
    <property type="entry name" value="ZINC_FINGER_C2H2_1"/>
    <property type="match status" value="11"/>
</dbReference>
<dbReference type="PROSITE" id="PS50157">
    <property type="entry name" value="ZINC_FINGER_C2H2_2"/>
    <property type="match status" value="11"/>
</dbReference>
<name>ZN366_HUMAN</name>
<protein>
    <recommendedName>
        <fullName evidence="5">Zinc finger protein 366</fullName>
    </recommendedName>
    <alternativeName>
        <fullName evidence="6">Dendritic cell-specific transcript protein</fullName>
        <shortName evidence="6">DC-SCRIPT</shortName>
    </alternativeName>
</protein>
<reference key="1">
    <citation type="journal article" date="2004" name="Nat. Genet.">
        <title>Complete sequencing and characterization of 21,243 full-length human cDNAs.</title>
        <authorList>
            <person name="Ota T."/>
            <person name="Suzuki Y."/>
            <person name="Nishikawa T."/>
            <person name="Otsuki T."/>
            <person name="Sugiyama T."/>
            <person name="Irie R."/>
            <person name="Wakamatsu A."/>
            <person name="Hayashi K."/>
            <person name="Sato H."/>
            <person name="Nagai K."/>
            <person name="Kimura K."/>
            <person name="Makita H."/>
            <person name="Sekine M."/>
            <person name="Obayashi M."/>
            <person name="Nishi T."/>
            <person name="Shibahara T."/>
            <person name="Tanaka T."/>
            <person name="Ishii S."/>
            <person name="Yamamoto J."/>
            <person name="Saito K."/>
            <person name="Kawai Y."/>
            <person name="Isono Y."/>
            <person name="Nakamura Y."/>
            <person name="Nagahari K."/>
            <person name="Murakami K."/>
            <person name="Yasuda T."/>
            <person name="Iwayanagi T."/>
            <person name="Wagatsuma M."/>
            <person name="Shiratori A."/>
            <person name="Sudo H."/>
            <person name="Hosoiri T."/>
            <person name="Kaku Y."/>
            <person name="Kodaira H."/>
            <person name="Kondo H."/>
            <person name="Sugawara M."/>
            <person name="Takahashi M."/>
            <person name="Kanda K."/>
            <person name="Yokoi T."/>
            <person name="Furuya T."/>
            <person name="Kikkawa E."/>
            <person name="Omura Y."/>
            <person name="Abe K."/>
            <person name="Kamihara K."/>
            <person name="Katsuta N."/>
            <person name="Sato K."/>
            <person name="Tanikawa M."/>
            <person name="Yamazaki M."/>
            <person name="Ninomiya K."/>
            <person name="Ishibashi T."/>
            <person name="Yamashita H."/>
            <person name="Murakawa K."/>
            <person name="Fujimori K."/>
            <person name="Tanai H."/>
            <person name="Kimata M."/>
            <person name="Watanabe M."/>
            <person name="Hiraoka S."/>
            <person name="Chiba Y."/>
            <person name="Ishida S."/>
            <person name="Ono Y."/>
            <person name="Takiguchi S."/>
            <person name="Watanabe S."/>
            <person name="Yosida M."/>
            <person name="Hotuta T."/>
            <person name="Kusano J."/>
            <person name="Kanehori K."/>
            <person name="Takahashi-Fujii A."/>
            <person name="Hara H."/>
            <person name="Tanase T.-O."/>
            <person name="Nomura Y."/>
            <person name="Togiya S."/>
            <person name="Komai F."/>
            <person name="Hara R."/>
            <person name="Takeuchi K."/>
            <person name="Arita M."/>
            <person name="Imose N."/>
            <person name="Musashino K."/>
            <person name="Yuuki H."/>
            <person name="Oshima A."/>
            <person name="Sasaki N."/>
            <person name="Aotsuka S."/>
            <person name="Yoshikawa Y."/>
            <person name="Matsunawa H."/>
            <person name="Ichihara T."/>
            <person name="Shiohata N."/>
            <person name="Sano S."/>
            <person name="Moriya S."/>
            <person name="Momiyama H."/>
            <person name="Satoh N."/>
            <person name="Takami S."/>
            <person name="Terashima Y."/>
            <person name="Suzuki O."/>
            <person name="Nakagawa S."/>
            <person name="Senoh A."/>
            <person name="Mizoguchi H."/>
            <person name="Goto Y."/>
            <person name="Shimizu F."/>
            <person name="Wakebe H."/>
            <person name="Hishigaki H."/>
            <person name="Watanabe T."/>
            <person name="Sugiyama A."/>
            <person name="Takemoto M."/>
            <person name="Kawakami B."/>
            <person name="Yamazaki M."/>
            <person name="Watanabe K."/>
            <person name="Kumagai A."/>
            <person name="Itakura S."/>
            <person name="Fukuzumi Y."/>
            <person name="Fujimori Y."/>
            <person name="Komiyama M."/>
            <person name="Tashiro H."/>
            <person name="Tanigami A."/>
            <person name="Fujiwara T."/>
            <person name="Ono T."/>
            <person name="Yamada K."/>
            <person name="Fujii Y."/>
            <person name="Ozaki K."/>
            <person name="Hirao M."/>
            <person name="Ohmori Y."/>
            <person name="Kawabata A."/>
            <person name="Hikiji T."/>
            <person name="Kobatake N."/>
            <person name="Inagaki H."/>
            <person name="Ikema Y."/>
            <person name="Okamoto S."/>
            <person name="Okitani R."/>
            <person name="Kawakami T."/>
            <person name="Noguchi S."/>
            <person name="Itoh T."/>
            <person name="Shigeta K."/>
            <person name="Senba T."/>
            <person name="Matsumura K."/>
            <person name="Nakajima Y."/>
            <person name="Mizuno T."/>
            <person name="Morinaga M."/>
            <person name="Sasaki M."/>
            <person name="Togashi T."/>
            <person name="Oyama M."/>
            <person name="Hata H."/>
            <person name="Watanabe M."/>
            <person name="Komatsu T."/>
            <person name="Mizushima-Sugano J."/>
            <person name="Satoh T."/>
            <person name="Shirai Y."/>
            <person name="Takahashi Y."/>
            <person name="Nakagawa K."/>
            <person name="Okumura K."/>
            <person name="Nagase T."/>
            <person name="Nomura N."/>
            <person name="Kikuchi H."/>
            <person name="Masuho Y."/>
            <person name="Yamashita R."/>
            <person name="Nakai K."/>
            <person name="Yada T."/>
            <person name="Nakamura Y."/>
            <person name="Ohara O."/>
            <person name="Isogai T."/>
            <person name="Sugano S."/>
        </authorList>
    </citation>
    <scope>NUCLEOTIDE SEQUENCE [LARGE SCALE MRNA]</scope>
    <source>
        <tissue>Spleen</tissue>
    </source>
</reference>
<reference key="2">
    <citation type="journal article" date="2007" name="BMC Genomics">
        <title>The full-ORF clone resource of the German cDNA consortium.</title>
        <authorList>
            <person name="Bechtel S."/>
            <person name="Rosenfelder H."/>
            <person name="Duda A."/>
            <person name="Schmidt C.P."/>
            <person name="Ernst U."/>
            <person name="Wellenreuther R."/>
            <person name="Mehrle A."/>
            <person name="Schuster C."/>
            <person name="Bahr A."/>
            <person name="Bloecker H."/>
            <person name="Heubner D."/>
            <person name="Hoerlein A."/>
            <person name="Michel G."/>
            <person name="Wedler H."/>
            <person name="Koehrer K."/>
            <person name="Ottenwaelder B."/>
            <person name="Poustka A."/>
            <person name="Wiemann S."/>
            <person name="Schupp I."/>
        </authorList>
    </citation>
    <scope>NUCLEOTIDE SEQUENCE [LARGE SCALE MRNA]</scope>
    <source>
        <tissue>Heart</tissue>
    </source>
</reference>
<reference key="3">
    <citation type="submission" date="2005-07" db="EMBL/GenBank/DDBJ databases">
        <authorList>
            <person name="Mural R.J."/>
            <person name="Istrail S."/>
            <person name="Sutton G."/>
            <person name="Florea L."/>
            <person name="Halpern A.L."/>
            <person name="Mobarry C.M."/>
            <person name="Lippert R."/>
            <person name="Walenz B."/>
            <person name="Shatkay H."/>
            <person name="Dew I."/>
            <person name="Miller J.R."/>
            <person name="Flanigan M.J."/>
            <person name="Edwards N.J."/>
            <person name="Bolanos R."/>
            <person name="Fasulo D."/>
            <person name="Halldorsson B.V."/>
            <person name="Hannenhalli S."/>
            <person name="Turner R."/>
            <person name="Yooseph S."/>
            <person name="Lu F."/>
            <person name="Nusskern D.R."/>
            <person name="Shue B.C."/>
            <person name="Zheng X.H."/>
            <person name="Zhong F."/>
            <person name="Delcher A.L."/>
            <person name="Huson D.H."/>
            <person name="Kravitz S.A."/>
            <person name="Mouchard L."/>
            <person name="Reinert K."/>
            <person name="Remington K.A."/>
            <person name="Clark A.G."/>
            <person name="Waterman M.S."/>
            <person name="Eichler E.E."/>
            <person name="Adams M.D."/>
            <person name="Hunkapiller M.W."/>
            <person name="Myers E.W."/>
            <person name="Venter J.C."/>
        </authorList>
    </citation>
    <scope>NUCLEOTIDE SEQUENCE [LARGE SCALE GENOMIC DNA]</scope>
</reference>
<reference key="4">
    <citation type="journal article" date="2004" name="Genome Res.">
        <title>The status, quality, and expansion of the NIH full-length cDNA project: the Mammalian Gene Collection (MGC).</title>
        <authorList>
            <consortium name="The MGC Project Team"/>
        </authorList>
    </citation>
    <scope>NUCLEOTIDE SEQUENCE [LARGE SCALE MRNA]</scope>
</reference>
<reference key="5">
    <citation type="journal article" date="2002" name="Gene">
        <title>Fugu and human sequence comparison identifies novel human genes and conserved non-coding sequences.</title>
        <authorList>
            <person name="Gilligan P."/>
            <person name="Brenner S."/>
            <person name="Venkatesh B."/>
        </authorList>
    </citation>
    <scope>IDENTIFICATION</scope>
</reference>
<reference key="6">
    <citation type="journal article" date="2006" name="J. Immunol.">
        <title>Identification and characterization of DC-SCRIPT, a novel dendritic cell-expressed member of the zinc finger family of transcriptional regulators.</title>
        <authorList>
            <person name="Triantis V."/>
            <person name="Trancikova D.E."/>
            <person name="Looman M.W."/>
            <person name="Hartgers F.C."/>
            <person name="Janssen R.A."/>
            <person name="Adema G.J."/>
        </authorList>
    </citation>
    <scope>INTERACTION WITH CTBP1</scope>
    <scope>SUBCELLULAR LOCATION</scope>
    <scope>TISSUE SPECIFICITY</scope>
    <scope>MOTIF</scope>
    <scope>MUTAGENESIS OF LEU-593 AND LEU-648</scope>
</reference>
<reference key="7">
    <citation type="journal article" date="2006" name="Nucleic Acids Res.">
        <title>ZNF366 is an estrogen receptor corepressor that acts through CtBP and histone deacetylases.</title>
        <authorList>
            <person name="Lopez-Garcia J."/>
            <person name="Periyasamy M."/>
            <person name="Thomas R.S."/>
            <person name="Christian M."/>
            <person name="Leao M."/>
            <person name="Jat P."/>
            <person name="Kindle K.B."/>
            <person name="Heery D.M."/>
            <person name="Parker M.G."/>
            <person name="Buluwela L."/>
            <person name="Kamalati T."/>
            <person name="Ali S."/>
        </authorList>
    </citation>
    <scope>FUNCTION</scope>
    <scope>SUBCELLULAR LOCATION</scope>
    <scope>INTERACTION WITH ESR1; NRIP1 AND CTBP1</scope>
    <scope>MOTIF</scope>
    <scope>MUTAGENESIS OF PRO-590; ASP-592; PRO-645 AND ASP-647</scope>
</reference>
<proteinExistence type="evidence at protein level"/>